<evidence type="ECO:0000255" key="1">
    <source>
        <dbReference type="HAMAP-Rule" id="MF_00532"/>
    </source>
</evidence>
<evidence type="ECO:0000305" key="2"/>
<keyword id="KW-0687">Ribonucleoprotein</keyword>
<keyword id="KW-0689">Ribosomal protein</keyword>
<proteinExistence type="inferred from homology"/>
<dbReference type="EMBL" id="FM204883">
    <property type="protein sequence ID" value="CAW95233.1"/>
    <property type="molecule type" value="Genomic_DNA"/>
</dbReference>
<dbReference type="RefSeq" id="WP_012516324.1">
    <property type="nucleotide sequence ID" value="NC_012471.1"/>
</dbReference>
<dbReference type="SMR" id="C0M903"/>
<dbReference type="GeneID" id="83705654"/>
<dbReference type="KEGG" id="seu:SEQ_1985"/>
<dbReference type="HOGENOM" id="CLU_046483_2_1_9"/>
<dbReference type="OrthoDB" id="9803965at2"/>
<dbReference type="Proteomes" id="UP000001365">
    <property type="component" value="Chromosome"/>
</dbReference>
<dbReference type="GO" id="GO:0022627">
    <property type="term" value="C:cytosolic small ribosomal subunit"/>
    <property type="evidence" value="ECO:0007669"/>
    <property type="project" value="TreeGrafter"/>
</dbReference>
<dbReference type="GO" id="GO:0003723">
    <property type="term" value="F:RNA binding"/>
    <property type="evidence" value="ECO:0007669"/>
    <property type="project" value="TreeGrafter"/>
</dbReference>
<dbReference type="GO" id="GO:0003735">
    <property type="term" value="F:structural constituent of ribosome"/>
    <property type="evidence" value="ECO:0007669"/>
    <property type="project" value="InterPro"/>
</dbReference>
<dbReference type="GO" id="GO:0006412">
    <property type="term" value="P:translation"/>
    <property type="evidence" value="ECO:0007669"/>
    <property type="project" value="UniProtKB-UniRule"/>
</dbReference>
<dbReference type="FunFam" id="3.30.230.10:FF:000001">
    <property type="entry name" value="30S ribosomal protein S9"/>
    <property type="match status" value="1"/>
</dbReference>
<dbReference type="Gene3D" id="3.30.230.10">
    <property type="match status" value="1"/>
</dbReference>
<dbReference type="HAMAP" id="MF_00532_B">
    <property type="entry name" value="Ribosomal_uS9_B"/>
    <property type="match status" value="1"/>
</dbReference>
<dbReference type="InterPro" id="IPR020568">
    <property type="entry name" value="Ribosomal_Su5_D2-typ_SF"/>
</dbReference>
<dbReference type="InterPro" id="IPR000754">
    <property type="entry name" value="Ribosomal_uS9"/>
</dbReference>
<dbReference type="InterPro" id="IPR023035">
    <property type="entry name" value="Ribosomal_uS9_bac/plastid"/>
</dbReference>
<dbReference type="InterPro" id="IPR020574">
    <property type="entry name" value="Ribosomal_uS9_CS"/>
</dbReference>
<dbReference type="InterPro" id="IPR014721">
    <property type="entry name" value="Ribsml_uS5_D2-typ_fold_subgr"/>
</dbReference>
<dbReference type="NCBIfam" id="NF001099">
    <property type="entry name" value="PRK00132.1"/>
    <property type="match status" value="1"/>
</dbReference>
<dbReference type="PANTHER" id="PTHR21569">
    <property type="entry name" value="RIBOSOMAL PROTEIN S9"/>
    <property type="match status" value="1"/>
</dbReference>
<dbReference type="PANTHER" id="PTHR21569:SF1">
    <property type="entry name" value="SMALL RIBOSOMAL SUBUNIT PROTEIN US9M"/>
    <property type="match status" value="1"/>
</dbReference>
<dbReference type="Pfam" id="PF00380">
    <property type="entry name" value="Ribosomal_S9"/>
    <property type="match status" value="1"/>
</dbReference>
<dbReference type="SUPFAM" id="SSF54211">
    <property type="entry name" value="Ribosomal protein S5 domain 2-like"/>
    <property type="match status" value="1"/>
</dbReference>
<dbReference type="PROSITE" id="PS00360">
    <property type="entry name" value="RIBOSOMAL_S9"/>
    <property type="match status" value="1"/>
</dbReference>
<organism>
    <name type="scientific">Streptococcus equi subsp. equi (strain 4047)</name>
    <dbReference type="NCBI Taxonomy" id="553482"/>
    <lineage>
        <taxon>Bacteria</taxon>
        <taxon>Bacillati</taxon>
        <taxon>Bacillota</taxon>
        <taxon>Bacilli</taxon>
        <taxon>Lactobacillales</taxon>
        <taxon>Streptococcaceae</taxon>
        <taxon>Streptococcus</taxon>
    </lineage>
</organism>
<protein>
    <recommendedName>
        <fullName evidence="1">Small ribosomal subunit protein uS9</fullName>
    </recommendedName>
    <alternativeName>
        <fullName evidence="2">30S ribosomal protein S9</fullName>
    </alternativeName>
</protein>
<name>RS9_STRE4</name>
<comment type="similarity">
    <text evidence="1">Belongs to the universal ribosomal protein uS9 family.</text>
</comment>
<sequence>MAQAQYAGTGRRKNAVARVRLVPGTGKITVNKKDVEEYIPHADLRLVINQPFAVTSTEGSYDVFVNVVGGGYAGQSGAIRHGIARALLQVDPDFRDSLKRAGLLTRDARMVERKKPGLKKARKASQFSKR</sequence>
<feature type="chain" id="PRO_1000146470" description="Small ribosomal subunit protein uS9">
    <location>
        <begin position="1"/>
        <end position="130"/>
    </location>
</feature>
<gene>
    <name evidence="1" type="primary">rpsI</name>
    <name type="ordered locus">SEQ_1985</name>
</gene>
<reference key="1">
    <citation type="journal article" date="2009" name="PLoS Pathog.">
        <title>Genomic evidence for the evolution of Streptococcus equi: host restriction, increased virulence, and genetic exchange with human pathogens.</title>
        <authorList>
            <person name="Holden M.T.G."/>
            <person name="Heather Z."/>
            <person name="Paillot R."/>
            <person name="Steward K.F."/>
            <person name="Webb K."/>
            <person name="Ainslie F."/>
            <person name="Jourdan T."/>
            <person name="Bason N.C."/>
            <person name="Holroyd N.E."/>
            <person name="Mungall K."/>
            <person name="Quail M.A."/>
            <person name="Sanders M."/>
            <person name="Simmonds M."/>
            <person name="Willey D."/>
            <person name="Brooks K."/>
            <person name="Aanensen D.M."/>
            <person name="Spratt B.G."/>
            <person name="Jolley K.A."/>
            <person name="Maiden M.C.J."/>
            <person name="Kehoe M."/>
            <person name="Chanter N."/>
            <person name="Bentley S.D."/>
            <person name="Robinson C."/>
            <person name="Maskell D.J."/>
            <person name="Parkhill J."/>
            <person name="Waller A.S."/>
        </authorList>
    </citation>
    <scope>NUCLEOTIDE SEQUENCE [LARGE SCALE GENOMIC DNA]</scope>
    <source>
        <strain>4047</strain>
    </source>
</reference>
<accession>C0M903</accession>